<proteinExistence type="evidence at transcript level"/>
<dbReference type="EC" id="5.6.2.1" evidence="4"/>
<dbReference type="EMBL" id="L07777">
    <property type="protein sequence ID" value="AAB36608.1"/>
    <property type="molecule type" value="mRNA"/>
</dbReference>
<dbReference type="PIR" id="S72366">
    <property type="entry name" value="S72366"/>
</dbReference>
<dbReference type="RefSeq" id="NP_001084031.1">
    <property type="nucleotide sequence ID" value="NM_001090562.1"/>
</dbReference>
<dbReference type="SMR" id="P41512"/>
<dbReference type="BioGRID" id="100588">
    <property type="interactions" value="1"/>
</dbReference>
<dbReference type="GeneID" id="399263"/>
<dbReference type="KEGG" id="xla:399263"/>
<dbReference type="AGR" id="Xenbase:XB-GENE-950006"/>
<dbReference type="CTD" id="399263"/>
<dbReference type="Xenbase" id="XB-GENE-950006">
    <property type="gene designation" value="top1.L"/>
</dbReference>
<dbReference type="OrthoDB" id="47179at2759"/>
<dbReference type="Proteomes" id="UP000186698">
    <property type="component" value="Chromosome 9_10L"/>
</dbReference>
<dbReference type="Bgee" id="399263">
    <property type="expression patterns" value="Expressed in gastrula and 19 other cell types or tissues"/>
</dbReference>
<dbReference type="GO" id="GO:0005694">
    <property type="term" value="C:chromosome"/>
    <property type="evidence" value="ECO:0007669"/>
    <property type="project" value="InterPro"/>
</dbReference>
<dbReference type="GO" id="GO:0005730">
    <property type="term" value="C:nucleolus"/>
    <property type="evidence" value="ECO:0000318"/>
    <property type="project" value="GO_Central"/>
</dbReference>
<dbReference type="GO" id="GO:0003917">
    <property type="term" value="F:DNA topoisomerase type I (single strand cut, ATP-independent) activity"/>
    <property type="evidence" value="ECO:0000318"/>
    <property type="project" value="GO_Central"/>
</dbReference>
<dbReference type="GO" id="GO:0000978">
    <property type="term" value="F:RNA polymerase II cis-regulatory region sequence-specific DNA binding"/>
    <property type="evidence" value="ECO:0000250"/>
    <property type="project" value="UniProtKB"/>
</dbReference>
<dbReference type="GO" id="GO:0006338">
    <property type="term" value="P:chromatin remodeling"/>
    <property type="evidence" value="ECO:0000250"/>
    <property type="project" value="UniProtKB"/>
</dbReference>
<dbReference type="GO" id="GO:0007059">
    <property type="term" value="P:chromosome segregation"/>
    <property type="evidence" value="ECO:0000318"/>
    <property type="project" value="GO_Central"/>
</dbReference>
<dbReference type="GO" id="GO:0032922">
    <property type="term" value="P:circadian regulation of gene expression"/>
    <property type="evidence" value="ECO:0000250"/>
    <property type="project" value="UniProtKB"/>
</dbReference>
<dbReference type="GO" id="GO:0006260">
    <property type="term" value="P:DNA replication"/>
    <property type="evidence" value="ECO:0000318"/>
    <property type="project" value="GO_Central"/>
</dbReference>
<dbReference type="GO" id="GO:0006265">
    <property type="term" value="P:DNA topological change"/>
    <property type="evidence" value="ECO:0000318"/>
    <property type="project" value="GO_Central"/>
</dbReference>
<dbReference type="CDD" id="cd00659">
    <property type="entry name" value="Topo_IB_C"/>
    <property type="match status" value="1"/>
</dbReference>
<dbReference type="CDD" id="cd03488">
    <property type="entry name" value="Topoisomer_IB_N_htopoI_like"/>
    <property type="match status" value="1"/>
</dbReference>
<dbReference type="FunFam" id="1.10.10.41:FF:000001">
    <property type="entry name" value="DNA topoisomerase I"/>
    <property type="match status" value="1"/>
</dbReference>
<dbReference type="FunFam" id="1.10.132.10:FF:000001">
    <property type="entry name" value="DNA topoisomerase I"/>
    <property type="match status" value="1"/>
</dbReference>
<dbReference type="FunFam" id="2.170.11.10:FF:000002">
    <property type="entry name" value="DNA topoisomerase I"/>
    <property type="match status" value="1"/>
</dbReference>
<dbReference type="FunFam" id="3.90.15.10:FF:000001">
    <property type="entry name" value="DNA topoisomerase I"/>
    <property type="match status" value="1"/>
</dbReference>
<dbReference type="Gene3D" id="1.10.132.10">
    <property type="match status" value="1"/>
</dbReference>
<dbReference type="Gene3D" id="2.170.11.10">
    <property type="entry name" value="DNA Topoisomerase I, domain 2"/>
    <property type="match status" value="1"/>
</dbReference>
<dbReference type="Gene3D" id="3.90.15.10">
    <property type="entry name" value="Topoisomerase I, Chain A, domain 3"/>
    <property type="match status" value="1"/>
</dbReference>
<dbReference type="Gene3D" id="1.10.10.41">
    <property type="entry name" value="Yeast DNA topoisomerase - domain 1"/>
    <property type="match status" value="1"/>
</dbReference>
<dbReference type="InterPro" id="IPR011010">
    <property type="entry name" value="DNA_brk_join_enz"/>
</dbReference>
<dbReference type="InterPro" id="IPR013034">
    <property type="entry name" value="DNA_topo_DNA_db_N_dom1"/>
</dbReference>
<dbReference type="InterPro" id="IPR013030">
    <property type="entry name" value="DNA_topo_DNA_db_N_dom2"/>
</dbReference>
<dbReference type="InterPro" id="IPR001631">
    <property type="entry name" value="TopoI"/>
</dbReference>
<dbReference type="InterPro" id="IPR025834">
    <property type="entry name" value="TopoI_C_dom"/>
</dbReference>
<dbReference type="InterPro" id="IPR014711">
    <property type="entry name" value="TopoI_cat_a-hlx-sub_euk"/>
</dbReference>
<dbReference type="InterPro" id="IPR014727">
    <property type="entry name" value="TopoI_cat_a/b-sub_euk"/>
</dbReference>
<dbReference type="InterPro" id="IPR013500">
    <property type="entry name" value="TopoI_cat_euk"/>
</dbReference>
<dbReference type="InterPro" id="IPR008336">
    <property type="entry name" value="TopoI_DNA-bd_euk"/>
</dbReference>
<dbReference type="InterPro" id="IPR036202">
    <property type="entry name" value="TopoI_DNA-bd_euk_N_sf"/>
</dbReference>
<dbReference type="InterPro" id="IPR013499">
    <property type="entry name" value="TopoI_euk"/>
</dbReference>
<dbReference type="InterPro" id="IPR018521">
    <property type="entry name" value="TopoIB_AS"/>
</dbReference>
<dbReference type="InterPro" id="IPR048045">
    <property type="entry name" value="Topoisomer_I_DNA-bd"/>
</dbReference>
<dbReference type="InterPro" id="IPR051062">
    <property type="entry name" value="Topoisomerase_IB"/>
</dbReference>
<dbReference type="PANTHER" id="PTHR10290:SF5">
    <property type="entry name" value="DNA TOPOISOMERASE 1"/>
    <property type="match status" value="1"/>
</dbReference>
<dbReference type="PANTHER" id="PTHR10290">
    <property type="entry name" value="DNA TOPOISOMERASE I"/>
    <property type="match status" value="1"/>
</dbReference>
<dbReference type="Pfam" id="PF14370">
    <property type="entry name" value="Topo_C_assoc"/>
    <property type="match status" value="1"/>
</dbReference>
<dbReference type="Pfam" id="PF01028">
    <property type="entry name" value="Topoisom_I"/>
    <property type="match status" value="1"/>
</dbReference>
<dbReference type="Pfam" id="PF02919">
    <property type="entry name" value="Topoisom_I_N"/>
    <property type="match status" value="1"/>
</dbReference>
<dbReference type="PRINTS" id="PR00416">
    <property type="entry name" value="EUTPISMRASEI"/>
</dbReference>
<dbReference type="SMART" id="SM00435">
    <property type="entry name" value="TOPEUc"/>
    <property type="match status" value="1"/>
</dbReference>
<dbReference type="SUPFAM" id="SSF56349">
    <property type="entry name" value="DNA breaking-rejoining enzymes"/>
    <property type="match status" value="1"/>
</dbReference>
<dbReference type="SUPFAM" id="SSF46596">
    <property type="entry name" value="Eukaryotic DNA topoisomerase I, dispensable insert domain"/>
    <property type="match status" value="1"/>
</dbReference>
<dbReference type="SUPFAM" id="SSF56741">
    <property type="entry name" value="Eukaryotic DNA topoisomerase I, N-terminal DNA-binding fragment"/>
    <property type="match status" value="1"/>
</dbReference>
<dbReference type="PROSITE" id="PS00176">
    <property type="entry name" value="TOPO_IB_1"/>
    <property type="match status" value="1"/>
</dbReference>
<dbReference type="PROSITE" id="PS52038">
    <property type="entry name" value="TOPO_IB_2"/>
    <property type="match status" value="1"/>
</dbReference>
<accession>P41512</accession>
<feature type="chain" id="PRO_0000145204" description="DNA topoisomerase 1">
    <location>
        <begin position="1"/>
        <end position="829"/>
    </location>
</feature>
<feature type="domain" description="Topo IB-type catalytic" evidence="3">
    <location>
        <begin position="488"/>
        <end position="821"/>
    </location>
</feature>
<feature type="region of interest" description="Disordered" evidence="5">
    <location>
        <begin position="1"/>
        <end position="248"/>
    </location>
</feature>
<feature type="region of interest" description="Interaction with DNA" evidence="1">
    <location>
        <begin position="481"/>
        <end position="482"/>
    </location>
</feature>
<feature type="region of interest" description="Interaction with DNA" evidence="1">
    <location>
        <begin position="544"/>
        <end position="549"/>
    </location>
</feature>
<feature type="region of interest" description="Interaction with DNA" evidence="1">
    <location>
        <begin position="641"/>
        <end position="643"/>
    </location>
</feature>
<feature type="compositionally biased region" description="Basic residues" evidence="5">
    <location>
        <begin position="22"/>
        <end position="36"/>
    </location>
</feature>
<feature type="compositionally biased region" description="Basic and acidic residues" evidence="5">
    <location>
        <begin position="37"/>
        <end position="58"/>
    </location>
</feature>
<feature type="compositionally biased region" description="Basic and acidic residues" evidence="5">
    <location>
        <begin position="68"/>
        <end position="159"/>
    </location>
</feature>
<feature type="compositionally biased region" description="Basic and acidic residues" evidence="5">
    <location>
        <begin position="193"/>
        <end position="220"/>
    </location>
</feature>
<feature type="active site" description="O-(3'-phospho-DNA)-tyrosine intermediate" evidence="3 4">
    <location>
        <position position="779"/>
    </location>
</feature>
<feature type="site" description="Interaction with DNA" evidence="1">
    <location>
        <position position="372"/>
    </location>
</feature>
<feature type="site" description="Interaction with DNA" evidence="1">
    <location>
        <position position="420"/>
    </location>
</feature>
<feature type="site" description="Interaction with DNA" evidence="1">
    <location>
        <position position="468"/>
    </location>
</feature>
<feature type="site" description="Interaction with DNA" evidence="1">
    <location>
        <position position="499"/>
    </location>
</feature>
<feature type="site" description="Interaction with DNA" evidence="1">
    <location>
        <position position="557"/>
    </location>
</feature>
<feature type="site" description="Interaction with DNA" evidence="1">
    <location>
        <position position="588"/>
    </location>
</feature>
<feature type="site" description="Interaction with DNA" evidence="1">
    <location>
        <position position="630"/>
    </location>
</feature>
<feature type="site" description="Interaction with DNA" evidence="1">
    <location>
        <position position="688"/>
    </location>
</feature>
<feature type="site" description="Interaction with DNA" evidence="1">
    <location>
        <position position="706"/>
    </location>
</feature>
<name>TOP1_XENLA</name>
<protein>
    <recommendedName>
        <fullName>DNA topoisomerase 1</fullName>
        <ecNumber evidence="4">5.6.2.1</ecNumber>
    </recommendedName>
    <alternativeName>
        <fullName>DNA topoisomerase I</fullName>
    </alternativeName>
</protein>
<gene>
    <name type="primary">top1</name>
</gene>
<keyword id="KW-0090">Biological rhythms</keyword>
<keyword id="KW-0238">DNA-binding</keyword>
<keyword id="KW-0413">Isomerase</keyword>
<keyword id="KW-0539">Nucleus</keyword>
<keyword id="KW-1185">Reference proteome</keyword>
<keyword id="KW-0799">Topoisomerase</keyword>
<organism>
    <name type="scientific">Xenopus laevis</name>
    <name type="common">African clawed frog</name>
    <dbReference type="NCBI Taxonomy" id="8355"/>
    <lineage>
        <taxon>Eukaryota</taxon>
        <taxon>Metazoa</taxon>
        <taxon>Chordata</taxon>
        <taxon>Craniata</taxon>
        <taxon>Vertebrata</taxon>
        <taxon>Euteleostomi</taxon>
        <taxon>Amphibia</taxon>
        <taxon>Batrachia</taxon>
        <taxon>Anura</taxon>
        <taxon>Pipoidea</taxon>
        <taxon>Pipidae</taxon>
        <taxon>Xenopodinae</taxon>
        <taxon>Xenopus</taxon>
        <taxon>Xenopus</taxon>
    </lineage>
</organism>
<sequence length="829" mass="98231">MSEDHVQNDSQIEAVFRVNDSHKHKKDKEHRHKEHKKDKDREKSKHNNSEHRDPSEKKHKDKHKNNDKHREKDGEKHRERDGEKHRDKNGEKHRDGEKHKEKDIEKHKEVEKHRVKDGEKHKEKDVEKHKEKDVEKHRDGEKHKHRDKDREKKKEEKMKSSSGGVKVKKENGFSSPVRVKDEPEDQGFYVSPKENKAMKRPREDDEDYKPKKIKSEDDKKGKKRKQEEEDIKPKKKSKAKGNEEGVKKKKVKKEEEEKWKWWEEERHRDGIKWKFLEHKGPVFAPPYEPVPDNVKFYYDGNLVKLSPKAEEVATFFAKMLDHEYTTKDIFRKNFFKDWKKEMTTDERNLITNLSKCDFNAMSLYFKEQSEARKNMTKEEKLKIKAENERLLQEYGYCIMDNHKERIANFRIEPPGLFRGRGDHPKMGKLKKRIMPEDIIINCSKDSKIPVAPAGHKWKEVRHDGKVTWLVSWTENIQGSIKYIMLNPSSRIKGEKDWQKYETARRLKMCVEKIRNTYKEDWKSKEMKVRQRAVALYFIDKLALRAGNEKEEGETADTVGCCSLRVEHINLFQELDGQEFVVEFDFPGKDSIRYYNKVPVEKRVFKNLQLFMENKQPDDDLFDRLNTSILNKHLQDLMEGLTAKVFRTYNASITLQQQLDELTNSDDNVPAKILSYNRANRAVAILCNHQRAPPKTFEKSMMNLQGKIDAKKDQLADARREFKSAKADAKVRRDEKTKKLVESKKKAVQRIEEQLMKLEVQATDREENKQIALGTSKLNYLDPRISVAWCKKYGVPIEKIYNKTQRKNLLGPSIWQTTTSNFNAEQRCFS</sequence>
<comment type="function">
    <text evidence="2">Releases the supercoiling and torsional tension of DNA introduced during the DNA replication and transcription by transiently cleaving and rejoining one strand of the DNA duplex. Introduces a single-strand break via transesterification at a target site in duplex DNA. The scissile phosphodiester is attacked by the catalytic tyrosine of the enzyme, resulting in the formation of a DNA-(3'-phosphotyrosyl)-enzyme intermediate and the expulsion of a 5'-OH DNA strand. TThe free DNA strand then rotates around the intact phosphodiester bond on the opposing strand, thus removing DNA supercoils. Finally, in the religation step, the DNA 5'-OH attacks the covalent intermediate to expel the active-site tyrosine and restore the DNA phosphodiester backbone. May play a role in the circadian transcription of the core circadian clock component BMAL1.</text>
</comment>
<comment type="catalytic activity">
    <reaction evidence="4">
        <text>ATP-independent breakage of single-stranded DNA, followed by passage and rejoining.</text>
        <dbReference type="EC" id="5.6.2.1"/>
    </reaction>
</comment>
<comment type="subunit">
    <text evidence="2">Monomer.</text>
</comment>
<comment type="subcellular location">
    <subcellularLocation>
        <location evidence="2">Nucleus</location>
    </subcellularLocation>
</comment>
<comment type="miscellaneous">
    <text>Eukaryotic topoisomerase I and II can relax both negative and positive supercoils, whereas prokaryotic enzymes relax only negative supercoils.</text>
</comment>
<comment type="similarity">
    <text evidence="6">Belongs to the type IB topoisomerase family.</text>
</comment>
<reference key="1">
    <citation type="journal article" date="1996" name="Nucleic Acids Res.">
        <title>Cloning and characterization of the gene for the somatic form of DNA topoisomerase I from Xenopus laevis.</title>
        <authorList>
            <person name="Pandit S.D."/>
            <person name="Richard R.E."/>
            <person name="Sternglanz R."/>
            <person name="Bogenhagen D.F."/>
        </authorList>
    </citation>
    <scope>NUCLEOTIDE SEQUENCE [MRNA]</scope>
</reference>
<evidence type="ECO:0000250" key="1"/>
<evidence type="ECO:0000250" key="2">
    <source>
        <dbReference type="UniProtKB" id="P11387"/>
    </source>
</evidence>
<evidence type="ECO:0000255" key="3">
    <source>
        <dbReference type="PROSITE-ProRule" id="PRU01382"/>
    </source>
</evidence>
<evidence type="ECO:0000255" key="4">
    <source>
        <dbReference type="PROSITE-ProRule" id="PRU10130"/>
    </source>
</evidence>
<evidence type="ECO:0000256" key="5">
    <source>
        <dbReference type="SAM" id="MobiDB-lite"/>
    </source>
</evidence>
<evidence type="ECO:0000305" key="6"/>